<sequence length="320" mass="36497">MNLDLTPLAWRLAGTPLAAWANDVQQQLDAKLAIGHGDLPRWRRAVDALPTLMPTQIELRECFRLAAPCDEATRQATREALMGLSPWRKGPFEVFGVHVDTEWRSDWKWARVAPHLDLAGKRILDVGCGNGYYMWRMLGAGADSVVGVDPNWLFFCQFHAMKRYLPELPAWHLPFALEELPPKLEGFETVFSMGVLYHRRSPVDHLLDLKDCLVRGGELVLETLVVEGDENTALVPEDRYAQMRNVWFLPSVPALERWLRRAGFVDVRCVDVSVTSVEEQRSTYWMRYQSLPDFLDPQDHGRTVEGLPAPMRAVLLARKP</sequence>
<gene>
    <name evidence="1" type="primary">cmoB</name>
    <name type="ordered locus">PST_1237</name>
</gene>
<protein>
    <recommendedName>
        <fullName evidence="1">tRNA U34 carboxymethyltransferase</fullName>
        <ecNumber evidence="1">2.5.1.-</ecNumber>
    </recommendedName>
</protein>
<dbReference type="EC" id="2.5.1.-" evidence="1"/>
<dbReference type="EMBL" id="CP000304">
    <property type="protein sequence ID" value="ABP78932.1"/>
    <property type="status" value="ALT_INIT"/>
    <property type="molecule type" value="Genomic_DNA"/>
</dbReference>
<dbReference type="RefSeq" id="WP_014596053.1">
    <property type="nucleotide sequence ID" value="NC_009434.1"/>
</dbReference>
<dbReference type="SMR" id="A4VIY1"/>
<dbReference type="KEGG" id="psa:PST_1237"/>
<dbReference type="eggNOG" id="COG0500">
    <property type="taxonomic scope" value="Bacteria"/>
</dbReference>
<dbReference type="HOGENOM" id="CLU_052665_0_0_6"/>
<dbReference type="Proteomes" id="UP000000233">
    <property type="component" value="Chromosome"/>
</dbReference>
<dbReference type="GO" id="GO:0008168">
    <property type="term" value="F:methyltransferase activity"/>
    <property type="evidence" value="ECO:0007669"/>
    <property type="project" value="TreeGrafter"/>
</dbReference>
<dbReference type="GO" id="GO:0016765">
    <property type="term" value="F:transferase activity, transferring alkyl or aryl (other than methyl) groups"/>
    <property type="evidence" value="ECO:0007669"/>
    <property type="project" value="UniProtKB-UniRule"/>
</dbReference>
<dbReference type="GO" id="GO:0002098">
    <property type="term" value="P:tRNA wobble uridine modification"/>
    <property type="evidence" value="ECO:0007669"/>
    <property type="project" value="InterPro"/>
</dbReference>
<dbReference type="CDD" id="cd02440">
    <property type="entry name" value="AdoMet_MTases"/>
    <property type="match status" value="1"/>
</dbReference>
<dbReference type="Gene3D" id="3.40.50.150">
    <property type="entry name" value="Vaccinia Virus protein VP39"/>
    <property type="match status" value="1"/>
</dbReference>
<dbReference type="HAMAP" id="MF_01590">
    <property type="entry name" value="tRNA_carboxymethyltr_CmoB"/>
    <property type="match status" value="1"/>
</dbReference>
<dbReference type="InterPro" id="IPR010017">
    <property type="entry name" value="CmoB"/>
</dbReference>
<dbReference type="InterPro" id="IPR027555">
    <property type="entry name" value="Mo5U34_MeTrfas-like"/>
</dbReference>
<dbReference type="InterPro" id="IPR029063">
    <property type="entry name" value="SAM-dependent_MTases_sf"/>
</dbReference>
<dbReference type="NCBIfam" id="NF011650">
    <property type="entry name" value="PRK15068.1"/>
    <property type="match status" value="1"/>
</dbReference>
<dbReference type="NCBIfam" id="TIGR00452">
    <property type="entry name" value="tRNA 5-methoxyuridine(34)/uridine 5-oxyacetic acid(34) synthase CmoB"/>
    <property type="match status" value="1"/>
</dbReference>
<dbReference type="PANTHER" id="PTHR43464">
    <property type="entry name" value="METHYLTRANSFERASE"/>
    <property type="match status" value="1"/>
</dbReference>
<dbReference type="PANTHER" id="PTHR43464:SF95">
    <property type="entry name" value="TRNA U34 CARBOXYMETHYLTRANSFERASE"/>
    <property type="match status" value="1"/>
</dbReference>
<dbReference type="Pfam" id="PF08003">
    <property type="entry name" value="Methyltransf_9"/>
    <property type="match status" value="1"/>
</dbReference>
<dbReference type="SUPFAM" id="SSF53335">
    <property type="entry name" value="S-adenosyl-L-methionine-dependent methyltransferases"/>
    <property type="match status" value="1"/>
</dbReference>
<reference key="1">
    <citation type="journal article" date="2008" name="Proc. Natl. Acad. Sci. U.S.A.">
        <title>Nitrogen fixation island and rhizosphere competence traits in the genome of root-associated Pseudomonas stutzeri A1501.</title>
        <authorList>
            <person name="Yan Y."/>
            <person name="Yang J."/>
            <person name="Dou Y."/>
            <person name="Chen M."/>
            <person name="Ping S."/>
            <person name="Peng J."/>
            <person name="Lu W."/>
            <person name="Zhang W."/>
            <person name="Yao Z."/>
            <person name="Li H."/>
            <person name="Liu W."/>
            <person name="He S."/>
            <person name="Geng L."/>
            <person name="Zhang X."/>
            <person name="Yang F."/>
            <person name="Yu H."/>
            <person name="Zhan Y."/>
            <person name="Li D."/>
            <person name="Lin Z."/>
            <person name="Wang Y."/>
            <person name="Elmerich C."/>
            <person name="Lin M."/>
            <person name="Jin Q."/>
        </authorList>
    </citation>
    <scope>NUCLEOTIDE SEQUENCE [LARGE SCALE GENOMIC DNA]</scope>
    <source>
        <strain>A1501</strain>
    </source>
</reference>
<feature type="chain" id="PRO_0000313950" description="tRNA U34 carboxymethyltransferase">
    <location>
        <begin position="1"/>
        <end position="320"/>
    </location>
</feature>
<feature type="binding site" evidence="1">
    <location>
        <position position="89"/>
    </location>
    <ligand>
        <name>carboxy-S-adenosyl-L-methionine</name>
        <dbReference type="ChEBI" id="CHEBI:134278"/>
    </ligand>
</feature>
<feature type="binding site" evidence="1">
    <location>
        <position position="103"/>
    </location>
    <ligand>
        <name>carboxy-S-adenosyl-L-methionine</name>
        <dbReference type="ChEBI" id="CHEBI:134278"/>
    </ligand>
</feature>
<feature type="binding site" evidence="1">
    <location>
        <position position="108"/>
    </location>
    <ligand>
        <name>carboxy-S-adenosyl-L-methionine</name>
        <dbReference type="ChEBI" id="CHEBI:134278"/>
    </ligand>
</feature>
<feature type="binding site" evidence="1">
    <location>
        <position position="127"/>
    </location>
    <ligand>
        <name>carboxy-S-adenosyl-L-methionine</name>
        <dbReference type="ChEBI" id="CHEBI:134278"/>
    </ligand>
</feature>
<feature type="binding site" evidence="1">
    <location>
        <begin position="177"/>
        <end position="178"/>
    </location>
    <ligand>
        <name>carboxy-S-adenosyl-L-methionine</name>
        <dbReference type="ChEBI" id="CHEBI:134278"/>
    </ligand>
</feature>
<feature type="binding site" evidence="1">
    <location>
        <position position="193"/>
    </location>
    <ligand>
        <name>carboxy-S-adenosyl-L-methionine</name>
        <dbReference type="ChEBI" id="CHEBI:134278"/>
    </ligand>
</feature>
<feature type="binding site" evidence="1">
    <location>
        <position position="197"/>
    </location>
    <ligand>
        <name>carboxy-S-adenosyl-L-methionine</name>
        <dbReference type="ChEBI" id="CHEBI:134278"/>
    </ligand>
</feature>
<feature type="binding site" evidence="1">
    <location>
        <position position="312"/>
    </location>
    <ligand>
        <name>carboxy-S-adenosyl-L-methionine</name>
        <dbReference type="ChEBI" id="CHEBI:134278"/>
    </ligand>
</feature>
<evidence type="ECO:0000255" key="1">
    <source>
        <dbReference type="HAMAP-Rule" id="MF_01590"/>
    </source>
</evidence>
<evidence type="ECO:0000305" key="2"/>
<comment type="function">
    <text evidence="1">Catalyzes carboxymethyl transfer from carboxy-S-adenosyl-L-methionine (Cx-SAM) to 5-hydroxyuridine (ho5U) to form 5-carboxymethoxyuridine (cmo5U) at position 34 in tRNAs.</text>
</comment>
<comment type="catalytic activity">
    <reaction evidence="1">
        <text>carboxy-S-adenosyl-L-methionine + 5-hydroxyuridine(34) in tRNA = 5-carboxymethoxyuridine(34) in tRNA + S-adenosyl-L-homocysteine + H(+)</text>
        <dbReference type="Rhea" id="RHEA:52848"/>
        <dbReference type="Rhea" id="RHEA-COMP:13381"/>
        <dbReference type="Rhea" id="RHEA-COMP:13383"/>
        <dbReference type="ChEBI" id="CHEBI:15378"/>
        <dbReference type="ChEBI" id="CHEBI:57856"/>
        <dbReference type="ChEBI" id="CHEBI:134278"/>
        <dbReference type="ChEBI" id="CHEBI:136877"/>
        <dbReference type="ChEBI" id="CHEBI:136879"/>
    </reaction>
</comment>
<comment type="subunit">
    <text evidence="1">Homotetramer.</text>
</comment>
<comment type="similarity">
    <text evidence="1">Belongs to the class I-like SAM-binding methyltransferase superfamily. CmoB family.</text>
</comment>
<comment type="sequence caution" evidence="2">
    <conflict type="erroneous initiation">
        <sequence resource="EMBL-CDS" id="ABP78932"/>
    </conflict>
</comment>
<keyword id="KW-1185">Reference proteome</keyword>
<keyword id="KW-0808">Transferase</keyword>
<keyword id="KW-0819">tRNA processing</keyword>
<proteinExistence type="inferred from homology"/>
<organism>
    <name type="scientific">Stutzerimonas stutzeri (strain A1501)</name>
    <name type="common">Pseudomonas stutzeri</name>
    <dbReference type="NCBI Taxonomy" id="379731"/>
    <lineage>
        <taxon>Bacteria</taxon>
        <taxon>Pseudomonadati</taxon>
        <taxon>Pseudomonadota</taxon>
        <taxon>Gammaproteobacteria</taxon>
        <taxon>Pseudomonadales</taxon>
        <taxon>Pseudomonadaceae</taxon>
        <taxon>Stutzerimonas</taxon>
    </lineage>
</organism>
<name>CMOB_STUS1</name>
<accession>A4VIY1</accession>